<proteinExistence type="inferred from homology"/>
<sequence>MAKTDIARRVYNHAWKLDPIIRSLIDTDFYKLLMLQMIWKLYPDVNASFTLINRTKRVHLAEEIDEGELREQLDHARTLRLSKKEMIWLAGNSFYGRAQIFEPEFLAWLSNFQLPEYELSKKDGQYVLDFHGAWKETTMWEIPALAIVNELRSRSAMKALGPFTLDVLYARAKAKMWSKVERLRELPGLRISDFGTRRRHSFLWQRWCVEALKEGIGPAFTGTSNVLLAMDSDLEAVGTNAHELPMVAAALAQTDEQLRNAPYKILRDWNKLYGGNLLIVLPDAFGTAAFLRDAPEWVADWTGFRPDSAPPIEGGEKIIDWWKKMGRDPRQKLLIFSDGLDVDAIIDTYRHFEGRVRMSFGWGTNLTNDFAGCAPTEISGLNPISVVCKVSDANGRPAVKLSDNPQKATGEPAEVERYLKFFGTEDRVDQTVLV</sequence>
<accession>B3PXL5</accession>
<keyword id="KW-0436">Ligase</keyword>
<keyword id="KW-0597">Phosphoprotein</keyword>
<keyword id="KW-0662">Pyridine nucleotide biosynthesis</keyword>
<comment type="function">
    <text evidence="1">Catalyzes the synthesis of beta-nicotinate D-ribonucleotide from nicotinate and 5-phospho-D-ribose 1-phosphate at the expense of ATP.</text>
</comment>
<comment type="catalytic activity">
    <reaction evidence="1">
        <text>nicotinate + 5-phospho-alpha-D-ribose 1-diphosphate + ATP + H2O = nicotinate beta-D-ribonucleotide + ADP + phosphate + diphosphate</text>
        <dbReference type="Rhea" id="RHEA:36163"/>
        <dbReference type="ChEBI" id="CHEBI:15377"/>
        <dbReference type="ChEBI" id="CHEBI:30616"/>
        <dbReference type="ChEBI" id="CHEBI:32544"/>
        <dbReference type="ChEBI" id="CHEBI:33019"/>
        <dbReference type="ChEBI" id="CHEBI:43474"/>
        <dbReference type="ChEBI" id="CHEBI:57502"/>
        <dbReference type="ChEBI" id="CHEBI:58017"/>
        <dbReference type="ChEBI" id="CHEBI:456216"/>
        <dbReference type="EC" id="6.3.4.21"/>
    </reaction>
</comment>
<comment type="pathway">
    <text evidence="1">Cofactor biosynthesis; NAD(+) biosynthesis; nicotinate D-ribonucleotide from nicotinate: step 1/1.</text>
</comment>
<comment type="PTM">
    <text evidence="1">Transiently phosphorylated on a His residue during the reaction cycle. Phosphorylation strongly increases the affinity for substrates and increases the rate of nicotinate D-ribonucleotide production. Dephosphorylation regenerates the low-affinity form of the enzyme, leading to product release.</text>
</comment>
<comment type="similarity">
    <text evidence="1">Belongs to the NAPRTase family.</text>
</comment>
<reference key="1">
    <citation type="journal article" date="2010" name="Appl. Environ. Microbiol.">
        <title>Conserved symbiotic plasmid DNA sequences in the multireplicon pangenomic structure of Rhizobium etli.</title>
        <authorList>
            <person name="Gonzalez V."/>
            <person name="Acosta J.L."/>
            <person name="Santamaria R.I."/>
            <person name="Bustos P."/>
            <person name="Fernandez J.L."/>
            <person name="Hernandez Gonzalez I.L."/>
            <person name="Diaz R."/>
            <person name="Flores M."/>
            <person name="Palacios R."/>
            <person name="Mora J."/>
            <person name="Davila G."/>
        </authorList>
    </citation>
    <scope>NUCLEOTIDE SEQUENCE [LARGE SCALE GENOMIC DNA]</scope>
    <source>
        <strain>CIAT 652</strain>
    </source>
</reference>
<evidence type="ECO:0000255" key="1">
    <source>
        <dbReference type="HAMAP-Rule" id="MF_00570"/>
    </source>
</evidence>
<dbReference type="EC" id="6.3.4.21" evidence="1"/>
<dbReference type="EMBL" id="CP001074">
    <property type="protein sequence ID" value="ACE89221.1"/>
    <property type="molecule type" value="Genomic_DNA"/>
</dbReference>
<dbReference type="SMR" id="B3PXL5"/>
<dbReference type="KEGG" id="rec:RHECIAT_CH0000225"/>
<dbReference type="eggNOG" id="COG1488">
    <property type="taxonomic scope" value="Bacteria"/>
</dbReference>
<dbReference type="HOGENOM" id="CLU_030991_1_0_5"/>
<dbReference type="UniPathway" id="UPA00253">
    <property type="reaction ID" value="UER00457"/>
</dbReference>
<dbReference type="Proteomes" id="UP000008817">
    <property type="component" value="Chromosome"/>
</dbReference>
<dbReference type="GO" id="GO:0005829">
    <property type="term" value="C:cytosol"/>
    <property type="evidence" value="ECO:0007669"/>
    <property type="project" value="TreeGrafter"/>
</dbReference>
<dbReference type="GO" id="GO:0004516">
    <property type="term" value="F:nicotinate phosphoribosyltransferase activity"/>
    <property type="evidence" value="ECO:0007669"/>
    <property type="project" value="UniProtKB-UniRule"/>
</dbReference>
<dbReference type="GO" id="GO:0034355">
    <property type="term" value="P:NAD biosynthetic process via the salvage pathway"/>
    <property type="evidence" value="ECO:0007669"/>
    <property type="project" value="TreeGrafter"/>
</dbReference>
<dbReference type="Gene3D" id="3.20.140.10">
    <property type="entry name" value="nicotinate phosphoribosyltransferase"/>
    <property type="match status" value="1"/>
</dbReference>
<dbReference type="HAMAP" id="MF_00570">
    <property type="entry name" value="NAPRTase"/>
    <property type="match status" value="1"/>
</dbReference>
<dbReference type="InterPro" id="IPR041525">
    <property type="entry name" value="N/Namide_PRibTrfase"/>
</dbReference>
<dbReference type="InterPro" id="IPR040727">
    <property type="entry name" value="NAPRTase_N"/>
</dbReference>
<dbReference type="InterPro" id="IPR006406">
    <property type="entry name" value="Nic_PRibTrfase"/>
</dbReference>
<dbReference type="InterPro" id="IPR007229">
    <property type="entry name" value="Nic_PRibTrfase-Fam"/>
</dbReference>
<dbReference type="InterPro" id="IPR036068">
    <property type="entry name" value="Nicotinate_pribotase-like_C"/>
</dbReference>
<dbReference type="NCBIfam" id="TIGR01514">
    <property type="entry name" value="NAPRTase"/>
    <property type="match status" value="1"/>
</dbReference>
<dbReference type="NCBIfam" id="NF003704">
    <property type="entry name" value="PRK05321.1"/>
    <property type="match status" value="1"/>
</dbReference>
<dbReference type="PANTHER" id="PTHR11098">
    <property type="entry name" value="NICOTINATE PHOSPHORIBOSYLTRANSFERASE"/>
    <property type="match status" value="1"/>
</dbReference>
<dbReference type="PANTHER" id="PTHR11098:SF1">
    <property type="entry name" value="NICOTINATE PHOSPHORIBOSYLTRANSFERASE"/>
    <property type="match status" value="1"/>
</dbReference>
<dbReference type="Pfam" id="PF04095">
    <property type="entry name" value="NAPRTase"/>
    <property type="match status" value="1"/>
</dbReference>
<dbReference type="Pfam" id="PF17767">
    <property type="entry name" value="NAPRTase_N"/>
    <property type="match status" value="1"/>
</dbReference>
<dbReference type="PIRSF" id="PIRSF000484">
    <property type="entry name" value="NAPRT"/>
    <property type="match status" value="1"/>
</dbReference>
<dbReference type="SUPFAM" id="SSF51690">
    <property type="entry name" value="Nicotinate/Quinolinate PRTase C-terminal domain-like"/>
    <property type="match status" value="1"/>
</dbReference>
<dbReference type="SUPFAM" id="SSF54675">
    <property type="entry name" value="Nicotinate/Quinolinate PRTase N-terminal domain-like"/>
    <property type="match status" value="1"/>
</dbReference>
<feature type="chain" id="PRO_1000129480" description="Nicotinate phosphoribosyltransferase">
    <location>
        <begin position="1"/>
        <end position="434"/>
    </location>
</feature>
<feature type="modified residue" description="Phosphohistidine; by autocatalysis" evidence="1">
    <location>
        <position position="242"/>
    </location>
</feature>
<organism>
    <name type="scientific">Rhizobium etli (strain CIAT 652)</name>
    <dbReference type="NCBI Taxonomy" id="491916"/>
    <lineage>
        <taxon>Bacteria</taxon>
        <taxon>Pseudomonadati</taxon>
        <taxon>Pseudomonadota</taxon>
        <taxon>Alphaproteobacteria</taxon>
        <taxon>Hyphomicrobiales</taxon>
        <taxon>Rhizobiaceae</taxon>
        <taxon>Rhizobium/Agrobacterium group</taxon>
        <taxon>Rhizobium</taxon>
    </lineage>
</organism>
<protein>
    <recommendedName>
        <fullName evidence="1">Nicotinate phosphoribosyltransferase</fullName>
        <shortName evidence="1">NAPRTase</shortName>
        <ecNumber evidence="1">6.3.4.21</ecNumber>
    </recommendedName>
</protein>
<gene>
    <name evidence="1" type="primary">pncB</name>
    <name type="ordered locus">RHECIAT_CH0000225</name>
</gene>
<name>PNCB_RHIE6</name>